<reference evidence="4 6" key="1">
    <citation type="journal article" date="1998" name="Biochem. Biophys. Res. Commun.">
        <title>Identification and characterization in Xenopus of XsmgGDS, a RalB-binding protein.</title>
        <authorList>
            <person name="Iouzalen N."/>
            <person name="Camonis J."/>
            <person name="Moreau J."/>
        </authorList>
    </citation>
    <scope>NUCLEOTIDE SEQUENCE [MRNA]</scope>
    <scope>INTERACTION WITH RALB</scope>
    <scope>TISSUE SPECIFICITY</scope>
    <scope>DEVELOPMENTAL STAGE</scope>
    <source>
        <tissue evidence="3">Oocyte</tissue>
    </source>
</reference>
<reference evidence="5" key="2">
    <citation type="submission" date="2004-08" db="EMBL/GenBank/DDBJ databases">
        <authorList>
            <consortium name="NIH - Xenopus Gene Collection (XGC) project"/>
        </authorList>
    </citation>
    <scope>NUCLEOTIDE SEQUENCE [LARGE SCALE MRNA]</scope>
    <source>
        <tissue evidence="5">Eye</tissue>
    </source>
</reference>
<dbReference type="EMBL" id="AJ005870">
    <property type="protein sequence ID" value="CAA06746.1"/>
    <property type="molecule type" value="mRNA"/>
</dbReference>
<dbReference type="EMBL" id="BC079775">
    <property type="protein sequence ID" value="AAH79775.1"/>
    <property type="molecule type" value="mRNA"/>
</dbReference>
<dbReference type="RefSeq" id="NP_001081078.1">
    <property type="nucleotide sequence ID" value="NM_001087609.1"/>
</dbReference>
<dbReference type="SMR" id="O93614"/>
<dbReference type="IntAct" id="O93614">
    <property type="interactions" value="2"/>
</dbReference>
<dbReference type="DNASU" id="394369"/>
<dbReference type="GeneID" id="394369"/>
<dbReference type="KEGG" id="xla:394369"/>
<dbReference type="AGR" id="Xenbase:XB-GENE-1004458"/>
<dbReference type="CTD" id="394369"/>
<dbReference type="Xenbase" id="XB-GENE-1004458">
    <property type="gene designation" value="rap1gds1.L"/>
</dbReference>
<dbReference type="OrthoDB" id="26149at2759"/>
<dbReference type="Proteomes" id="UP000186698">
    <property type="component" value="Chromosome 1L"/>
</dbReference>
<dbReference type="Bgee" id="394369">
    <property type="expression patterns" value="Expressed in brain and 19 other cell types or tissues"/>
</dbReference>
<dbReference type="GO" id="GO:0005829">
    <property type="term" value="C:cytosol"/>
    <property type="evidence" value="ECO:0000318"/>
    <property type="project" value="GO_Central"/>
</dbReference>
<dbReference type="GO" id="GO:0005783">
    <property type="term" value="C:endoplasmic reticulum"/>
    <property type="evidence" value="ECO:0007669"/>
    <property type="project" value="UniProtKB-SubCell"/>
</dbReference>
<dbReference type="GO" id="GO:0005739">
    <property type="term" value="C:mitochondrion"/>
    <property type="evidence" value="ECO:0007669"/>
    <property type="project" value="UniProtKB-SubCell"/>
</dbReference>
<dbReference type="GO" id="GO:0005096">
    <property type="term" value="F:GTPase activator activity"/>
    <property type="evidence" value="ECO:0007669"/>
    <property type="project" value="UniProtKB-KW"/>
</dbReference>
<dbReference type="GO" id="GO:0005085">
    <property type="term" value="F:guanyl-nucleotide exchange factor activity"/>
    <property type="evidence" value="ECO:0007669"/>
    <property type="project" value="InterPro"/>
</dbReference>
<dbReference type="GO" id="GO:0031267">
    <property type="term" value="F:small GTPase binding"/>
    <property type="evidence" value="ECO:0000353"/>
    <property type="project" value="UniProtKB"/>
</dbReference>
<dbReference type="GO" id="GO:0043547">
    <property type="term" value="P:positive regulation of GTPase activity"/>
    <property type="evidence" value="ECO:0000353"/>
    <property type="project" value="UniProtKB"/>
</dbReference>
<dbReference type="GO" id="GO:0007264">
    <property type="term" value="P:small GTPase-mediated signal transduction"/>
    <property type="evidence" value="ECO:0000353"/>
    <property type="project" value="UniProtKB"/>
</dbReference>
<dbReference type="FunFam" id="1.25.10.10:FF:000127">
    <property type="entry name" value="rap1 GTPase-GDP dissociation stimulator 1 isoform X1"/>
    <property type="match status" value="1"/>
</dbReference>
<dbReference type="FunFam" id="1.25.10.10:FF:000141">
    <property type="entry name" value="rap1 GTPase-GDP dissociation stimulator 1 isoform X1"/>
    <property type="match status" value="1"/>
</dbReference>
<dbReference type="FunFam" id="1.25.10.10:FF:000144">
    <property type="entry name" value="rap1 GTPase-GDP dissociation stimulator 1 isoform X1"/>
    <property type="match status" value="1"/>
</dbReference>
<dbReference type="Gene3D" id="1.25.10.10">
    <property type="entry name" value="Leucine-rich Repeat Variant"/>
    <property type="match status" value="3"/>
</dbReference>
<dbReference type="InterPro" id="IPR011989">
    <property type="entry name" value="ARM-like"/>
</dbReference>
<dbReference type="InterPro" id="IPR016024">
    <property type="entry name" value="ARM-type_fold"/>
</dbReference>
<dbReference type="InterPro" id="IPR000225">
    <property type="entry name" value="Armadillo"/>
</dbReference>
<dbReference type="InterPro" id="IPR040144">
    <property type="entry name" value="RAP1GDS1"/>
</dbReference>
<dbReference type="PANTHER" id="PTHR10957">
    <property type="entry name" value="RAP1 GTPASE-GDP DISSOCIATION STIMULATOR 1"/>
    <property type="match status" value="1"/>
</dbReference>
<dbReference type="Pfam" id="PF00514">
    <property type="entry name" value="Arm"/>
    <property type="match status" value="4"/>
</dbReference>
<dbReference type="SMART" id="SM00185">
    <property type="entry name" value="ARM"/>
    <property type="match status" value="5"/>
</dbReference>
<dbReference type="SUPFAM" id="SSF48371">
    <property type="entry name" value="ARM repeat"/>
    <property type="match status" value="2"/>
</dbReference>
<dbReference type="PROSITE" id="PS50176">
    <property type="entry name" value="ARM_REPEAT"/>
    <property type="match status" value="1"/>
</dbReference>
<evidence type="ECO:0000250" key="1">
    <source>
        <dbReference type="UniProtKB" id="P52306"/>
    </source>
</evidence>
<evidence type="ECO:0000255" key="2"/>
<evidence type="ECO:0000269" key="3">
    <source>
    </source>
</evidence>
<evidence type="ECO:0000305" key="4"/>
<evidence type="ECO:0000312" key="5">
    <source>
        <dbReference type="EMBL" id="AAH79775.1"/>
    </source>
</evidence>
<evidence type="ECO:0000312" key="6">
    <source>
        <dbReference type="EMBL" id="CAA06746.1"/>
    </source>
</evidence>
<proteinExistence type="evidence at protein level"/>
<gene>
    <name type="primary">rap1gds1-a</name>
</gene>
<sequence>MDNLNDALEKLKLTGTECTSDKLDGCFDCLLQALGHNNTESSEKIQQSGILQLFASILNSQSSCASKVAHIVAEIAKNELMRIPCVEAGLIPPLVQLLHSKDQEVLLQTGRALGNICYDNHEGRRAVDQEGGAQIVVDHLRSMCTLTDPSSEKLMTVFCGMLMNYSSENDSLQTQLIQMGVIPILVDLLGVHSQNTALTEMCLVAFGNLAELESSKEQFAGTNIAEEIVKLFKKQTEHEKREIIFEVLAPLAENDAIKMQLVEAGLVECLLDVVQQTVNSEKDDDIAELKTSSDLMVLLLLGDESMQKLFEGGKGSVFQRVLSWLPSNNHQLQLAGALAIANFARNDGNCIHMVDSEIVQKLLDLLDRHVEDGNVTVQHAALSALRNLAIPVVNKAKMLSAGVAEEVLKFLRSEMPPVQFKLLGTLRMLIDAQAEAAEQIGKNEKLAERLVEWCEAKDHAGVMGESNRLLSALIRHSKSKDVIRTIVQSGGIKHLVTMATSEHVIMQNEALVALGLIAALELQAAEHDLESAKLVEVLHRLLLDERSAPEIKYNSMVLICAAMGSVPLHKEVQKLAFLDVVSKLRSHENKTVAQQASLTEQKLTVQS</sequence>
<comment type="function">
    <text evidence="1">Stimulates GDP/GTP exchange reaction of a group of small GTP-binding proteins (G proteins) including Rap1a/Rap1b, RhoA, RhoB and KRas, by stimulating the dissociation of GDP from and the subsequent binding of GTP to each small G protein.</text>
</comment>
<comment type="subunit">
    <text evidence="3">Interacts with ralB (PubMed:9753634). Probably interacts with the post-translationally isoprenylated (geranyl-geranylation) forms of ral proteins. Interacts with both GDP-bound and GTP-bound forms of ralA, but interaction is much stronger with ralA-GDP (PubMed:9753634).</text>
</comment>
<comment type="subcellular location">
    <subcellularLocation>
        <location evidence="1">Cytoplasm</location>
        <location evidence="1">Cytosol</location>
    </subcellularLocation>
    <subcellularLocation>
        <location evidence="1">Endoplasmic reticulum</location>
    </subcellularLocation>
    <subcellularLocation>
        <location evidence="1">Mitochondrion</location>
    </subcellularLocation>
</comment>
<comment type="tissue specificity">
    <text evidence="3">Weakly expressed in adult tissues with highest levels found in spleen, kidney, skin and A6 cells.</text>
</comment>
<comment type="developmental stage">
    <text evidence="3">Expressed both maternally and zygotically from oogenesis through to late embryogenesis at a constant level.</text>
</comment>
<feature type="chain" id="PRO_0000228810" description="Rap1 GTPase-GDP dissociation stimulator 1-A">
    <location>
        <begin position="1"/>
        <end position="607"/>
    </location>
</feature>
<feature type="repeat" description="ARM 1" evidence="2">
    <location>
        <begin position="79"/>
        <end position="118"/>
    </location>
</feature>
<feature type="repeat" description="ARM 2" evidence="2">
    <location>
        <begin position="170"/>
        <end position="211"/>
    </location>
</feature>
<feature type="repeat" description="ARM 3" evidence="2">
    <location>
        <begin position="347"/>
        <end position="390"/>
    </location>
</feature>
<feature type="repeat" description="ARM 4" evidence="2">
    <location>
        <begin position="391"/>
        <end position="431"/>
    </location>
</feature>
<feature type="repeat" description="ARM 5" evidence="2">
    <location>
        <begin position="479"/>
        <end position="519"/>
    </location>
</feature>
<protein>
    <recommendedName>
        <fullName>Rap1 GTPase-GDP dissociation stimulator 1-A</fullName>
        <shortName>Rap1gds1-A protein</shortName>
    </recommendedName>
    <alternativeName>
        <fullName>RalB-binding protein A</fullName>
    </alternativeName>
    <alternativeName>
        <fullName>XsmgGDS-A</fullName>
        <shortName>smgGDS-A</shortName>
    </alternativeName>
</protein>
<accession>O93614</accession>
<organism>
    <name type="scientific">Xenopus laevis</name>
    <name type="common">African clawed frog</name>
    <dbReference type="NCBI Taxonomy" id="8355"/>
    <lineage>
        <taxon>Eukaryota</taxon>
        <taxon>Metazoa</taxon>
        <taxon>Chordata</taxon>
        <taxon>Craniata</taxon>
        <taxon>Vertebrata</taxon>
        <taxon>Euteleostomi</taxon>
        <taxon>Amphibia</taxon>
        <taxon>Batrachia</taxon>
        <taxon>Anura</taxon>
        <taxon>Pipoidea</taxon>
        <taxon>Pipidae</taxon>
        <taxon>Xenopodinae</taxon>
        <taxon>Xenopus</taxon>
        <taxon>Xenopus</taxon>
    </lineage>
</organism>
<keyword id="KW-0963">Cytoplasm</keyword>
<keyword id="KW-0256">Endoplasmic reticulum</keyword>
<keyword id="KW-0343">GTPase activation</keyword>
<keyword id="KW-0496">Mitochondrion</keyword>
<keyword id="KW-1185">Reference proteome</keyword>
<keyword id="KW-0677">Repeat</keyword>
<name>GDS1A_XENLA</name>